<sequence>MEKRIFTEEMVETEVKHQPKQEFSNADIQLDEEPKAVKAELIIEESLKPSRFWLRLFLAALALFGIATIAQSVQWLIDTWQANQWIYFAFAVAFFGISLAGVGAIINEWRKLRWLRKHHYHQQVSQQLLLETADTSGEKAREFCKSVVKNLAQTPMVQQVEQRWQSQLDEAYNSKEVLYLFSENVLSPIDNQVKKLISKNAAENAIIVAVSPLALVDILMVAWRNIALVNKITKAYGMELGYISRLKLFRMVMTNMVFAGATEIASDVGLDFFSQNLTARLSVRAAQGIGMGLLTARLGIKAMEFCRPVVFQQNERPKLSVVRQELIGVLKEQMFSKSREEFEFFHNN</sequence>
<proteinExistence type="inferred from homology"/>
<gene>
    <name type="ordered locus">HAPS_0079</name>
</gene>
<organism>
    <name type="scientific">Glaesserella parasuis serovar 5 (strain SH0165)</name>
    <name type="common">Haemophilus parasuis</name>
    <dbReference type="NCBI Taxonomy" id="557723"/>
    <lineage>
        <taxon>Bacteria</taxon>
        <taxon>Pseudomonadati</taxon>
        <taxon>Pseudomonadota</taxon>
        <taxon>Gammaproteobacteria</taxon>
        <taxon>Pasteurellales</taxon>
        <taxon>Pasteurellaceae</taxon>
        <taxon>Glaesserella</taxon>
    </lineage>
</organism>
<protein>
    <recommendedName>
        <fullName evidence="1">UPF0283 membrane protein HAPS_0079</fullName>
    </recommendedName>
</protein>
<feature type="chain" id="PRO_1000149861" description="UPF0283 membrane protein HAPS_0079">
    <location>
        <begin position="1"/>
        <end position="348"/>
    </location>
</feature>
<feature type="transmembrane region" description="Helical" evidence="1">
    <location>
        <begin position="57"/>
        <end position="77"/>
    </location>
</feature>
<feature type="transmembrane region" description="Helical" evidence="1">
    <location>
        <begin position="86"/>
        <end position="106"/>
    </location>
</feature>
<feature type="transmembrane region" description="Helical" evidence="1">
    <location>
        <begin position="203"/>
        <end position="223"/>
    </location>
</feature>
<dbReference type="EMBL" id="CP001321">
    <property type="protein sequence ID" value="ACL31783.1"/>
    <property type="molecule type" value="Genomic_DNA"/>
</dbReference>
<dbReference type="RefSeq" id="WP_012621543.1">
    <property type="nucleotide sequence ID" value="NC_011852.1"/>
</dbReference>
<dbReference type="STRING" id="557723.HAPS_0079"/>
<dbReference type="KEGG" id="hap:HAPS_0079"/>
<dbReference type="PATRIC" id="fig|557723.8.peg.82"/>
<dbReference type="HOGENOM" id="CLU_057693_2_0_6"/>
<dbReference type="Proteomes" id="UP000006743">
    <property type="component" value="Chromosome"/>
</dbReference>
<dbReference type="GO" id="GO:0005886">
    <property type="term" value="C:plasma membrane"/>
    <property type="evidence" value="ECO:0007669"/>
    <property type="project" value="UniProtKB-SubCell"/>
</dbReference>
<dbReference type="HAMAP" id="MF_01085">
    <property type="entry name" value="UPF0283"/>
    <property type="match status" value="1"/>
</dbReference>
<dbReference type="InterPro" id="IPR021147">
    <property type="entry name" value="DUF697"/>
</dbReference>
<dbReference type="InterPro" id="IPR006507">
    <property type="entry name" value="UPF0283"/>
</dbReference>
<dbReference type="NCBIfam" id="TIGR01620">
    <property type="entry name" value="hyp_HI0043"/>
    <property type="match status" value="1"/>
</dbReference>
<dbReference type="PANTHER" id="PTHR39342">
    <property type="entry name" value="UPF0283 MEMBRANE PROTEIN YCJF"/>
    <property type="match status" value="1"/>
</dbReference>
<dbReference type="PANTHER" id="PTHR39342:SF1">
    <property type="entry name" value="UPF0283 MEMBRANE PROTEIN YCJF"/>
    <property type="match status" value="1"/>
</dbReference>
<dbReference type="Pfam" id="PF05128">
    <property type="entry name" value="DUF697"/>
    <property type="match status" value="1"/>
</dbReference>
<keyword id="KW-0997">Cell inner membrane</keyword>
<keyword id="KW-1003">Cell membrane</keyword>
<keyword id="KW-0472">Membrane</keyword>
<keyword id="KW-1185">Reference proteome</keyword>
<keyword id="KW-0812">Transmembrane</keyword>
<keyword id="KW-1133">Transmembrane helix</keyword>
<comment type="subcellular location">
    <subcellularLocation>
        <location evidence="1">Cell inner membrane</location>
        <topology evidence="1">Multi-pass membrane protein</topology>
    </subcellularLocation>
</comment>
<comment type="similarity">
    <text evidence="1">Belongs to the UPF0283 family.</text>
</comment>
<accession>B8F381</accession>
<reference key="1">
    <citation type="journal article" date="2009" name="J. Bacteriol.">
        <title>Complete genome sequence of Haemophilus parasuis SH0165.</title>
        <authorList>
            <person name="Yue M."/>
            <person name="Yang F."/>
            <person name="Yang J."/>
            <person name="Bei W."/>
            <person name="Cai X."/>
            <person name="Chen L."/>
            <person name="Dong J."/>
            <person name="Zhou R."/>
            <person name="Jin M."/>
            <person name="Jin Q."/>
            <person name="Chen H."/>
        </authorList>
    </citation>
    <scope>NUCLEOTIDE SEQUENCE [LARGE SCALE GENOMIC DNA]</scope>
    <source>
        <strain>SH0165</strain>
    </source>
</reference>
<evidence type="ECO:0000255" key="1">
    <source>
        <dbReference type="HAMAP-Rule" id="MF_01085"/>
    </source>
</evidence>
<name>Y079_GLAP5</name>